<keyword id="KW-0167">Capsid protein</keyword>
<keyword id="KW-0426">Late protein</keyword>
<keyword id="KW-1185">Reference proteome</keyword>
<keyword id="KW-0694">RNA-binding</keyword>
<keyword id="KW-0118">Viral capsid assembly</keyword>
<keyword id="KW-1171">Viral genome ejection through host cell envelope</keyword>
<keyword id="KW-0231">Viral genome packaging</keyword>
<keyword id="KW-1162">Viral penetration into host cytoplasm</keyword>
<keyword id="KW-1188">Viral release from host cell</keyword>
<keyword id="KW-1244">Viral short tail ejection system</keyword>
<keyword id="KW-0946">Virion</keyword>
<keyword id="KW-1160">Virus entry into host cell</keyword>
<organism evidence="4">
    <name type="scientific">Staphylococcus phage 44AHJD</name>
    <dbReference type="NCBI Taxonomy" id="204086"/>
    <lineage>
        <taxon>Viruses</taxon>
        <taxon>Duplodnaviria</taxon>
        <taxon>Heunggongvirae</taxon>
        <taxon>Uroviricota</taxon>
        <taxon>Caudoviricetes</taxon>
        <taxon>Rountreeviridae</taxon>
        <taxon>Rakietenvirinae</taxon>
        <taxon>Rosenblumvirus</taxon>
    </lineage>
</organism>
<reference key="1">
    <citation type="journal article" date="2003" name="FEMS Microbiol. Lett.">
        <title>Complete nucleotide sequence and molecular characterization of two lytic Staphylococcus aureus phages: 44AHJD and P68.</title>
        <authorList>
            <person name="Vybiral D."/>
            <person name="Takac M."/>
            <person name="Loessner M."/>
            <person name="Witte A."/>
            <person name="von Ahsen U."/>
            <person name="Blasi U."/>
        </authorList>
    </citation>
    <scope>NUCLEOTIDE SEQUENCE [GENOMIC DNA]</scope>
    <scope>FUNCTION</scope>
</reference>
<sequence>MILGYVNNTYFNQAPNFSSNFNFQFQKRLTKEDIYFIVPDYLIPDDCLQIHKLYDNCMSGNFVVMQNKPIQYNSDIEIIEHYTDELAEVALSRFSLIMQAKFSKIFKSEINDESINQLVSEIYNGAPFVKMSPMFNADDDIIDLTSNSVIPALTEMKREYQNKISELSNYLGINSLAVDKESGVSDEEAKSNRGFTTSNSNIYLKGREPITFLSKRYGLDIKPYYDDETTSKISMVDTLFKDESSDING</sequence>
<dbReference type="EMBL" id="AF513032">
    <property type="protein sequence ID" value="AAO83871.1"/>
    <property type="molecule type" value="Genomic_DNA"/>
</dbReference>
<dbReference type="RefSeq" id="NP_817313.1">
    <property type="nucleotide sequence ID" value="NC_004678.1"/>
</dbReference>
<dbReference type="SMR" id="Q859K6"/>
<dbReference type="GeneID" id="1258929"/>
<dbReference type="KEGG" id="vg:1258929"/>
<dbReference type="OrthoDB" id="4704at10239"/>
<dbReference type="Proteomes" id="UP000007462">
    <property type="component" value="Segment"/>
</dbReference>
<dbReference type="GO" id="GO:0019028">
    <property type="term" value="C:viral capsid"/>
    <property type="evidence" value="ECO:0007669"/>
    <property type="project" value="UniProtKB-KW"/>
</dbReference>
<dbReference type="GO" id="GO:0003723">
    <property type="term" value="F:RNA binding"/>
    <property type="evidence" value="ECO:0007669"/>
    <property type="project" value="UniProtKB-KW"/>
</dbReference>
<dbReference type="GO" id="GO:0099002">
    <property type="term" value="P:symbiont genome ejection through host cell envelope, short tail mechanism"/>
    <property type="evidence" value="ECO:0007669"/>
    <property type="project" value="UniProtKB-KW"/>
</dbReference>
<dbReference type="InterPro" id="IPR008016">
    <property type="entry name" value="Gp10"/>
</dbReference>
<dbReference type="InterPro" id="IPR036199">
    <property type="entry name" value="Gp10_sf"/>
</dbReference>
<dbReference type="Pfam" id="PF05352">
    <property type="entry name" value="Phage_connector"/>
    <property type="match status" value="1"/>
</dbReference>
<dbReference type="SUPFAM" id="SSF56826">
    <property type="entry name" value="Upper collar protein gp10 (connector protein)"/>
    <property type="match status" value="1"/>
</dbReference>
<protein>
    <recommendedName>
        <fullName evidence="1">Portal protein</fullName>
    </recommendedName>
    <alternativeName>
        <fullName evidence="1">Connector protein</fullName>
    </alternativeName>
    <alternativeName>
        <fullName evidence="1">Gene product 19</fullName>
        <shortName evidence="1">gp19</shortName>
    </alternativeName>
    <alternativeName>
        <fullName evidence="1">Head-to-tail connector</fullName>
    </alternativeName>
    <alternativeName>
        <fullName evidence="1">Probable portal protein</fullName>
    </alternativeName>
    <alternativeName>
        <fullName evidence="1">Upper collar protein</fullName>
    </alternativeName>
</protein>
<feature type="chain" id="PRO_0000432922" description="Portal protein">
    <location>
        <begin position="1"/>
        <end position="249"/>
    </location>
</feature>
<comment type="function">
    <text evidence="1 2">Forms the portal vertex of the capsid. This portal plays critical roles in head assembly, genome packaging, neck/tail attachment, and genome ejection. The portal protein multimerizes as a single ring-shaped homododecamer arranged around a central channel. Binds to the 6 packaging RNA molecules (pRNA) forming a double-ring structure which in turn binds to the ATPase gp16 hexamer, forming the active DNA-translocating motor. This complex is essential for the specificity of packaging from the left DNA end.</text>
</comment>
<comment type="subunit">
    <text evidence="1">Homododecamer. Interacts with the pRNA.</text>
</comment>
<comment type="subcellular location">
    <subcellularLocation>
        <location evidence="1">Virion</location>
    </subcellularLocation>
    <text evidence="1">Present in 12 copies in the virion.</text>
</comment>
<comment type="similarity">
    <text evidence="3">Belongs to the phi29likevirus portal protein family.</text>
</comment>
<evidence type="ECO:0000250" key="1">
    <source>
        <dbReference type="UniProtKB" id="P04332"/>
    </source>
</evidence>
<evidence type="ECO:0000250" key="2">
    <source>
        <dbReference type="UniProtKB" id="P13334"/>
    </source>
</evidence>
<evidence type="ECO:0000305" key="3"/>
<evidence type="ECO:0000312" key="4">
    <source>
        <dbReference type="Proteomes" id="UP000007462"/>
    </source>
</evidence>
<organismHost>
    <name type="scientific">Staphylococcus aureus</name>
    <dbReference type="NCBI Taxonomy" id="1280"/>
</organismHost>
<proteinExistence type="inferred from homology"/>
<accession>Q859K6</accession>
<name>PORTL_BP44A</name>